<sequence>MELKDYYAIMGVKPTDDLKTIKTAYRRLARKYHPDVSKEPDAEARFKEVAEAWEVLSDEQRRAEYDQMWQHRNDPQFNRQFHHGDGQSFNAEDFDDIFSSIFGQHARQSRQRPAARGHDIEIEVAVFLEETLTEHKRTISYNLPVYNAFGMIEQEIPKTLNVKIPAGVGNGQRIRLKGQGTPGENGGPNGDLWLVIHIAPHPLFDIVGQDLEIVVPVSPWEAALGAKVTVPTLKESILLTIPPGSQAGQRLRVKGKGLVSKKQTGDLYAVLKIVMPPKPDENTAALWQQLADAQSSFDPRKDWGKA</sequence>
<evidence type="ECO:0000255" key="1">
    <source>
        <dbReference type="HAMAP-Rule" id="MF_01154"/>
    </source>
</evidence>
<protein>
    <recommendedName>
        <fullName evidence="1">Curved DNA-binding protein</fullName>
    </recommendedName>
</protein>
<accession>B6I976</accession>
<keyword id="KW-0143">Chaperone</keyword>
<keyword id="KW-0963">Cytoplasm</keyword>
<keyword id="KW-0238">DNA-binding</keyword>
<name>CBPA_ECOSE</name>
<comment type="function">
    <text evidence="1">DNA-binding protein that preferentially recognizes a curved DNA sequence. It is probably a functional analog of DnaJ; displays overlapping activities with DnaJ, but functions under different conditions, probably acting as a molecular chaperone in an adaptive response to environmental stresses other than heat shock. Lacks autonomous chaperone activity; binds native substrates and targets them for recognition by DnaK. Its activity is inhibited by the binding of CbpM.</text>
</comment>
<comment type="subcellular location">
    <subcellularLocation>
        <location evidence="1">Cytoplasm</location>
        <location evidence="1">Nucleoid</location>
    </subcellularLocation>
</comment>
<gene>
    <name evidence="1" type="primary">cbpA</name>
    <name type="ordered locus">ECSE_1062</name>
</gene>
<organism>
    <name type="scientific">Escherichia coli (strain SE11)</name>
    <dbReference type="NCBI Taxonomy" id="409438"/>
    <lineage>
        <taxon>Bacteria</taxon>
        <taxon>Pseudomonadati</taxon>
        <taxon>Pseudomonadota</taxon>
        <taxon>Gammaproteobacteria</taxon>
        <taxon>Enterobacterales</taxon>
        <taxon>Enterobacteriaceae</taxon>
        <taxon>Escherichia</taxon>
    </lineage>
</organism>
<feature type="chain" id="PRO_1000137751" description="Curved DNA-binding protein">
    <location>
        <begin position="1"/>
        <end position="306"/>
    </location>
</feature>
<feature type="domain" description="J" evidence="1">
    <location>
        <begin position="5"/>
        <end position="69"/>
    </location>
</feature>
<proteinExistence type="inferred from homology"/>
<dbReference type="EMBL" id="AP009240">
    <property type="protein sequence ID" value="BAG76586.1"/>
    <property type="molecule type" value="Genomic_DNA"/>
</dbReference>
<dbReference type="RefSeq" id="WP_000420617.1">
    <property type="nucleotide sequence ID" value="NC_011415.1"/>
</dbReference>
<dbReference type="SMR" id="B6I976"/>
<dbReference type="KEGG" id="ecy:ECSE_1062"/>
<dbReference type="HOGENOM" id="CLU_017633_0_0_6"/>
<dbReference type="Proteomes" id="UP000008199">
    <property type="component" value="Chromosome"/>
</dbReference>
<dbReference type="GO" id="GO:0005737">
    <property type="term" value="C:cytoplasm"/>
    <property type="evidence" value="ECO:0007669"/>
    <property type="project" value="UniProtKB-UniRule"/>
</dbReference>
<dbReference type="GO" id="GO:0009295">
    <property type="term" value="C:nucleoid"/>
    <property type="evidence" value="ECO:0007669"/>
    <property type="project" value="UniProtKB-SubCell"/>
</dbReference>
<dbReference type="GO" id="GO:0003681">
    <property type="term" value="F:bent DNA binding"/>
    <property type="evidence" value="ECO:0007669"/>
    <property type="project" value="UniProtKB-UniRule"/>
</dbReference>
<dbReference type="GO" id="GO:0051082">
    <property type="term" value="F:unfolded protein binding"/>
    <property type="evidence" value="ECO:0007669"/>
    <property type="project" value="InterPro"/>
</dbReference>
<dbReference type="GO" id="GO:0051085">
    <property type="term" value="P:chaperone cofactor-dependent protein refolding"/>
    <property type="evidence" value="ECO:0007669"/>
    <property type="project" value="TreeGrafter"/>
</dbReference>
<dbReference type="GO" id="GO:0042026">
    <property type="term" value="P:protein refolding"/>
    <property type="evidence" value="ECO:0007669"/>
    <property type="project" value="TreeGrafter"/>
</dbReference>
<dbReference type="CDD" id="cd06257">
    <property type="entry name" value="DnaJ"/>
    <property type="match status" value="1"/>
</dbReference>
<dbReference type="CDD" id="cd10747">
    <property type="entry name" value="DnaJ_C"/>
    <property type="match status" value="1"/>
</dbReference>
<dbReference type="FunFam" id="1.10.287.110:FF:000013">
    <property type="entry name" value="Curved DNA-binding protein"/>
    <property type="match status" value="1"/>
</dbReference>
<dbReference type="FunFam" id="2.60.260.20:FF:000008">
    <property type="entry name" value="Curved DNA-binding protein"/>
    <property type="match status" value="1"/>
</dbReference>
<dbReference type="FunFam" id="2.60.260.20:FF:000010">
    <property type="entry name" value="Curved DNA-binding protein"/>
    <property type="match status" value="1"/>
</dbReference>
<dbReference type="Gene3D" id="1.10.287.110">
    <property type="entry name" value="DnaJ domain"/>
    <property type="match status" value="1"/>
</dbReference>
<dbReference type="Gene3D" id="1.20.5.460">
    <property type="entry name" value="Single helix bin"/>
    <property type="match status" value="1"/>
</dbReference>
<dbReference type="Gene3D" id="2.60.260.20">
    <property type="entry name" value="Urease metallochaperone UreE, N-terminal domain"/>
    <property type="match status" value="2"/>
</dbReference>
<dbReference type="HAMAP" id="MF_01154">
    <property type="entry name" value="CbpA"/>
    <property type="match status" value="1"/>
</dbReference>
<dbReference type="InterPro" id="IPR023859">
    <property type="entry name" value="DNA-bd_curved-DNA"/>
</dbReference>
<dbReference type="InterPro" id="IPR002939">
    <property type="entry name" value="DnaJ_C"/>
</dbReference>
<dbReference type="InterPro" id="IPR001623">
    <property type="entry name" value="DnaJ_domain"/>
</dbReference>
<dbReference type="InterPro" id="IPR018253">
    <property type="entry name" value="DnaJ_domain_CS"/>
</dbReference>
<dbReference type="InterPro" id="IPR008971">
    <property type="entry name" value="HSP40/DnaJ_pept-bd"/>
</dbReference>
<dbReference type="InterPro" id="IPR036869">
    <property type="entry name" value="J_dom_sf"/>
</dbReference>
<dbReference type="NCBIfam" id="NF007618">
    <property type="entry name" value="PRK10266.1"/>
    <property type="match status" value="1"/>
</dbReference>
<dbReference type="PANTHER" id="PTHR43096">
    <property type="entry name" value="DNAJ HOMOLOG 1, MITOCHONDRIAL-RELATED"/>
    <property type="match status" value="1"/>
</dbReference>
<dbReference type="PANTHER" id="PTHR43096:SF52">
    <property type="entry name" value="DNAJ HOMOLOG 1, MITOCHONDRIAL-RELATED"/>
    <property type="match status" value="1"/>
</dbReference>
<dbReference type="Pfam" id="PF00226">
    <property type="entry name" value="DnaJ"/>
    <property type="match status" value="1"/>
</dbReference>
<dbReference type="Pfam" id="PF01556">
    <property type="entry name" value="DnaJ_C"/>
    <property type="match status" value="1"/>
</dbReference>
<dbReference type="PRINTS" id="PR00625">
    <property type="entry name" value="JDOMAIN"/>
</dbReference>
<dbReference type="SMART" id="SM00271">
    <property type="entry name" value="DnaJ"/>
    <property type="match status" value="1"/>
</dbReference>
<dbReference type="SUPFAM" id="SSF46565">
    <property type="entry name" value="Chaperone J-domain"/>
    <property type="match status" value="1"/>
</dbReference>
<dbReference type="SUPFAM" id="SSF49493">
    <property type="entry name" value="HSP40/DnaJ peptide-binding domain"/>
    <property type="match status" value="2"/>
</dbReference>
<dbReference type="PROSITE" id="PS00636">
    <property type="entry name" value="DNAJ_1"/>
    <property type="match status" value="1"/>
</dbReference>
<dbReference type="PROSITE" id="PS50076">
    <property type="entry name" value="DNAJ_2"/>
    <property type="match status" value="1"/>
</dbReference>
<reference key="1">
    <citation type="journal article" date="2008" name="DNA Res.">
        <title>Complete genome sequence and comparative analysis of the wild-type commensal Escherichia coli strain SE11 isolated from a healthy adult.</title>
        <authorList>
            <person name="Oshima K."/>
            <person name="Toh H."/>
            <person name="Ogura Y."/>
            <person name="Sasamoto H."/>
            <person name="Morita H."/>
            <person name="Park S.-H."/>
            <person name="Ooka T."/>
            <person name="Iyoda S."/>
            <person name="Taylor T.D."/>
            <person name="Hayashi T."/>
            <person name="Itoh K."/>
            <person name="Hattori M."/>
        </authorList>
    </citation>
    <scope>NUCLEOTIDE SEQUENCE [LARGE SCALE GENOMIC DNA]</scope>
    <source>
        <strain>SE11</strain>
    </source>
</reference>